<dbReference type="EC" id="2.6.1.52" evidence="1"/>
<dbReference type="EMBL" id="AP009044">
    <property type="protein sequence ID" value="BAF53916.1"/>
    <property type="molecule type" value="Genomic_DNA"/>
</dbReference>
<dbReference type="RefSeq" id="WP_011896935.1">
    <property type="nucleotide sequence ID" value="NC_009342.1"/>
</dbReference>
<dbReference type="SMR" id="A4QCG9"/>
<dbReference type="KEGG" id="cgt:cgR_0942"/>
<dbReference type="HOGENOM" id="CLU_061974_0_0_11"/>
<dbReference type="PhylomeDB" id="A4QCG9"/>
<dbReference type="UniPathway" id="UPA00135">
    <property type="reaction ID" value="UER00197"/>
</dbReference>
<dbReference type="UniPathway" id="UPA00244">
    <property type="reaction ID" value="UER00311"/>
</dbReference>
<dbReference type="Proteomes" id="UP000006698">
    <property type="component" value="Chromosome"/>
</dbReference>
<dbReference type="GO" id="GO:0005737">
    <property type="term" value="C:cytoplasm"/>
    <property type="evidence" value="ECO:0007669"/>
    <property type="project" value="UniProtKB-SubCell"/>
</dbReference>
<dbReference type="GO" id="GO:0008453">
    <property type="term" value="F:alanine-glyoxylate transaminase activity"/>
    <property type="evidence" value="ECO:0007669"/>
    <property type="project" value="TreeGrafter"/>
</dbReference>
<dbReference type="GO" id="GO:0004760">
    <property type="term" value="F:L-serine-pyruvate transaminase activity"/>
    <property type="evidence" value="ECO:0007669"/>
    <property type="project" value="TreeGrafter"/>
</dbReference>
<dbReference type="GO" id="GO:0004648">
    <property type="term" value="F:O-phospho-L-serine:2-oxoglutarate aminotransferase activity"/>
    <property type="evidence" value="ECO:0007669"/>
    <property type="project" value="UniProtKB-UniRule"/>
</dbReference>
<dbReference type="GO" id="GO:0030170">
    <property type="term" value="F:pyridoxal phosphate binding"/>
    <property type="evidence" value="ECO:0007669"/>
    <property type="project" value="UniProtKB-UniRule"/>
</dbReference>
<dbReference type="GO" id="GO:0019265">
    <property type="term" value="P:glycine biosynthetic process, by transamination of glyoxylate"/>
    <property type="evidence" value="ECO:0007669"/>
    <property type="project" value="TreeGrafter"/>
</dbReference>
<dbReference type="GO" id="GO:0006564">
    <property type="term" value="P:L-serine biosynthetic process"/>
    <property type="evidence" value="ECO:0007669"/>
    <property type="project" value="UniProtKB-UniRule"/>
</dbReference>
<dbReference type="GO" id="GO:0008615">
    <property type="term" value="P:pyridoxine biosynthetic process"/>
    <property type="evidence" value="ECO:0007669"/>
    <property type="project" value="UniProtKB-UniRule"/>
</dbReference>
<dbReference type="Gene3D" id="3.90.1150.10">
    <property type="entry name" value="Aspartate Aminotransferase, domain 1"/>
    <property type="match status" value="1"/>
</dbReference>
<dbReference type="Gene3D" id="3.40.640.10">
    <property type="entry name" value="Type I PLP-dependent aspartate aminotransferase-like (Major domain)"/>
    <property type="match status" value="1"/>
</dbReference>
<dbReference type="HAMAP" id="MF_00160">
    <property type="entry name" value="SerC_aminotrans_5"/>
    <property type="match status" value="1"/>
</dbReference>
<dbReference type="InterPro" id="IPR000192">
    <property type="entry name" value="Aminotrans_V_dom"/>
</dbReference>
<dbReference type="InterPro" id="IPR022278">
    <property type="entry name" value="Pser_aminoTfrase"/>
</dbReference>
<dbReference type="InterPro" id="IPR006272">
    <property type="entry name" value="Pser_aminoTfrase_mycobac"/>
</dbReference>
<dbReference type="InterPro" id="IPR015424">
    <property type="entry name" value="PyrdxlP-dep_Trfase"/>
</dbReference>
<dbReference type="InterPro" id="IPR015421">
    <property type="entry name" value="PyrdxlP-dep_Trfase_major"/>
</dbReference>
<dbReference type="InterPro" id="IPR015422">
    <property type="entry name" value="PyrdxlP-dep_Trfase_small"/>
</dbReference>
<dbReference type="NCBIfam" id="TIGR01366">
    <property type="entry name" value="serC_3"/>
    <property type="match status" value="1"/>
</dbReference>
<dbReference type="PANTHER" id="PTHR21152:SF40">
    <property type="entry name" value="ALANINE--GLYOXYLATE AMINOTRANSFERASE"/>
    <property type="match status" value="1"/>
</dbReference>
<dbReference type="PANTHER" id="PTHR21152">
    <property type="entry name" value="AMINOTRANSFERASE CLASS V"/>
    <property type="match status" value="1"/>
</dbReference>
<dbReference type="Pfam" id="PF00266">
    <property type="entry name" value="Aminotran_5"/>
    <property type="match status" value="1"/>
</dbReference>
<dbReference type="PIRSF" id="PIRSF000525">
    <property type="entry name" value="SerC"/>
    <property type="match status" value="1"/>
</dbReference>
<dbReference type="SUPFAM" id="SSF53383">
    <property type="entry name" value="PLP-dependent transferases"/>
    <property type="match status" value="1"/>
</dbReference>
<evidence type="ECO:0000255" key="1">
    <source>
        <dbReference type="HAMAP-Rule" id="MF_00160"/>
    </source>
</evidence>
<organism>
    <name type="scientific">Corynebacterium glutamicum (strain R)</name>
    <dbReference type="NCBI Taxonomy" id="340322"/>
    <lineage>
        <taxon>Bacteria</taxon>
        <taxon>Bacillati</taxon>
        <taxon>Actinomycetota</taxon>
        <taxon>Actinomycetes</taxon>
        <taxon>Mycobacteriales</taxon>
        <taxon>Corynebacteriaceae</taxon>
        <taxon>Corynebacterium</taxon>
    </lineage>
</organism>
<accession>A4QCG9</accession>
<protein>
    <recommendedName>
        <fullName evidence="1">Phosphoserine aminotransferase</fullName>
        <ecNumber evidence="1">2.6.1.52</ecNumber>
    </recommendedName>
    <alternativeName>
        <fullName evidence="1">Phosphohydroxythreonine aminotransferase</fullName>
        <shortName evidence="1">PSAT</shortName>
    </alternativeName>
</protein>
<reference key="1">
    <citation type="journal article" date="2007" name="Microbiology">
        <title>Comparative analysis of the Corynebacterium glutamicum group and complete genome sequence of strain R.</title>
        <authorList>
            <person name="Yukawa H."/>
            <person name="Omumasaba C.A."/>
            <person name="Nonaka H."/>
            <person name="Kos P."/>
            <person name="Okai N."/>
            <person name="Suzuki N."/>
            <person name="Suda M."/>
            <person name="Tsuge Y."/>
            <person name="Watanabe J."/>
            <person name="Ikeda Y."/>
            <person name="Vertes A.A."/>
            <person name="Inui M."/>
        </authorList>
    </citation>
    <scope>NUCLEOTIDE SEQUENCE [LARGE SCALE GENOMIC DNA]</scope>
    <source>
        <strain>R</strain>
    </source>
</reference>
<keyword id="KW-0028">Amino-acid biosynthesis</keyword>
<keyword id="KW-0032">Aminotransferase</keyword>
<keyword id="KW-0963">Cytoplasm</keyword>
<keyword id="KW-0663">Pyridoxal phosphate</keyword>
<keyword id="KW-0664">Pyridoxine biosynthesis</keyword>
<keyword id="KW-0718">Serine biosynthesis</keyword>
<keyword id="KW-0808">Transferase</keyword>
<proteinExistence type="inferred from homology"/>
<feature type="chain" id="PRO_1000058209" description="Phosphoserine aminotransferase">
    <location>
        <begin position="1"/>
        <end position="376"/>
    </location>
</feature>
<feature type="binding site" evidence="1">
    <location>
        <position position="46"/>
    </location>
    <ligand>
        <name>L-glutamate</name>
        <dbReference type="ChEBI" id="CHEBI:29985"/>
    </ligand>
</feature>
<feature type="binding site" evidence="1">
    <location>
        <begin position="80"/>
        <end position="81"/>
    </location>
    <ligand>
        <name>pyridoxal 5'-phosphate</name>
        <dbReference type="ChEBI" id="CHEBI:597326"/>
    </ligand>
</feature>
<feature type="binding site" evidence="1">
    <location>
        <position position="104"/>
    </location>
    <ligand>
        <name>pyridoxal 5'-phosphate</name>
        <dbReference type="ChEBI" id="CHEBI:597326"/>
    </ligand>
</feature>
<feature type="binding site" evidence="1">
    <location>
        <position position="150"/>
    </location>
    <ligand>
        <name>pyridoxal 5'-phosphate</name>
        <dbReference type="ChEBI" id="CHEBI:597326"/>
    </ligand>
</feature>
<feature type="binding site" evidence="1">
    <location>
        <position position="172"/>
    </location>
    <ligand>
        <name>pyridoxal 5'-phosphate</name>
        <dbReference type="ChEBI" id="CHEBI:597326"/>
    </ligand>
</feature>
<feature type="binding site" evidence="1">
    <location>
        <position position="195"/>
    </location>
    <ligand>
        <name>pyridoxal 5'-phosphate</name>
        <dbReference type="ChEBI" id="CHEBI:597326"/>
    </ligand>
</feature>
<feature type="binding site" evidence="1">
    <location>
        <begin position="247"/>
        <end position="248"/>
    </location>
    <ligand>
        <name>pyridoxal 5'-phosphate</name>
        <dbReference type="ChEBI" id="CHEBI:597326"/>
    </ligand>
</feature>
<feature type="modified residue" description="N6-(pyridoxal phosphate)lysine" evidence="1">
    <location>
        <position position="196"/>
    </location>
</feature>
<comment type="function">
    <text evidence="1">Catalyzes the reversible conversion of 3-phosphohydroxypyruvate to phosphoserine and of 3-hydroxy-2-oxo-4-phosphonooxybutanoate to phosphohydroxythreonine.</text>
</comment>
<comment type="catalytic activity">
    <reaction evidence="1">
        <text>O-phospho-L-serine + 2-oxoglutarate = 3-phosphooxypyruvate + L-glutamate</text>
        <dbReference type="Rhea" id="RHEA:14329"/>
        <dbReference type="ChEBI" id="CHEBI:16810"/>
        <dbReference type="ChEBI" id="CHEBI:18110"/>
        <dbReference type="ChEBI" id="CHEBI:29985"/>
        <dbReference type="ChEBI" id="CHEBI:57524"/>
        <dbReference type="EC" id="2.6.1.52"/>
    </reaction>
</comment>
<comment type="catalytic activity">
    <reaction evidence="1">
        <text>4-(phosphooxy)-L-threonine + 2-oxoglutarate = (R)-3-hydroxy-2-oxo-4-phosphooxybutanoate + L-glutamate</text>
        <dbReference type="Rhea" id="RHEA:16573"/>
        <dbReference type="ChEBI" id="CHEBI:16810"/>
        <dbReference type="ChEBI" id="CHEBI:29985"/>
        <dbReference type="ChEBI" id="CHEBI:58452"/>
        <dbReference type="ChEBI" id="CHEBI:58538"/>
        <dbReference type="EC" id="2.6.1.52"/>
    </reaction>
</comment>
<comment type="cofactor">
    <cofactor evidence="1">
        <name>pyridoxal 5'-phosphate</name>
        <dbReference type="ChEBI" id="CHEBI:597326"/>
    </cofactor>
    <text evidence="1">Binds 1 pyridoxal phosphate per subunit.</text>
</comment>
<comment type="pathway">
    <text evidence="1">Amino-acid biosynthesis; L-serine biosynthesis; L-serine from 3-phospho-D-glycerate: step 2/3.</text>
</comment>
<comment type="pathway">
    <text evidence="1">Cofactor biosynthesis; pyridoxine 5'-phosphate biosynthesis; pyridoxine 5'-phosphate from D-erythrose 4-phosphate: step 3/5.</text>
</comment>
<comment type="subunit">
    <text evidence="1">Homodimer.</text>
</comment>
<comment type="subcellular location">
    <subcellularLocation>
        <location evidence="1">Cytoplasm</location>
    </subcellularLocation>
</comment>
<comment type="similarity">
    <text evidence="1">Belongs to the class-V pyridoxal-phosphate-dependent aminotransferase family. SerC subfamily.</text>
</comment>
<gene>
    <name evidence="1" type="primary">serC</name>
    <name type="ordered locus">cgR_0942</name>
</gene>
<sequence length="376" mass="40050">MTDFPTLPSEFIPGDGRFGCGPSKVRPEQIQAIVDGSASVIGTSHRQPAVKNVVGSIREGLSDLFSLPEGYEIILSLGGATAFWDAATFGLIEKKSGHLSFGEFSSKFAKASKLAPWLYEPEIVTAETGDAPAPQAFEGADVIAWAHNETSTGAMVPVLRPEGSEGSLVAIDATSGAGGLPVDIKNSDVYYFSPQKCFASDGGLWLAAMSPAALERIEKINASDRFIPEFLNLQTAVDNSLKNQTYNTPAVATLLMLDNQVKWMNSNGGLDGMVARTTASSSALYNWAEAREEASPYVADAAKRSLVVGTIDFDDSIDAAVIAKILRANGILDTEPYRKLGRNQLRIGMFPAIDSTDVEKLTGAIDFILDGGFAKK</sequence>
<name>SERC_CORGB</name>